<protein>
    <recommendedName>
        <fullName evidence="1">UPF0246 protein Cgl1995/cg2186</fullName>
    </recommendedName>
</protein>
<dbReference type="EMBL" id="BA000036">
    <property type="protein sequence ID" value="BAB99388.1"/>
    <property type="molecule type" value="Genomic_DNA"/>
</dbReference>
<dbReference type="EMBL" id="BX927153">
    <property type="protein sequence ID" value="CAF20336.1"/>
    <property type="molecule type" value="Genomic_DNA"/>
</dbReference>
<dbReference type="RefSeq" id="NP_601201.1">
    <property type="nucleotide sequence ID" value="NC_003450.3"/>
</dbReference>
<dbReference type="SMR" id="Q8NP30"/>
<dbReference type="STRING" id="196627.cg2186"/>
<dbReference type="KEGG" id="cgb:cg2186"/>
<dbReference type="KEGG" id="cgl:Cgl1995"/>
<dbReference type="PATRIC" id="fig|196627.13.peg.1934"/>
<dbReference type="eggNOG" id="COG3022">
    <property type="taxonomic scope" value="Bacteria"/>
</dbReference>
<dbReference type="HOGENOM" id="CLU_071581_0_0_11"/>
<dbReference type="OrthoDB" id="3210767at2"/>
<dbReference type="BioCyc" id="CORYNE:G18NG-11587-MONOMER"/>
<dbReference type="Proteomes" id="UP000000582">
    <property type="component" value="Chromosome"/>
</dbReference>
<dbReference type="Proteomes" id="UP000001009">
    <property type="component" value="Chromosome"/>
</dbReference>
<dbReference type="GO" id="GO:0005829">
    <property type="term" value="C:cytosol"/>
    <property type="evidence" value="ECO:0007669"/>
    <property type="project" value="TreeGrafter"/>
</dbReference>
<dbReference type="GO" id="GO:0033194">
    <property type="term" value="P:response to hydroperoxide"/>
    <property type="evidence" value="ECO:0007669"/>
    <property type="project" value="TreeGrafter"/>
</dbReference>
<dbReference type="HAMAP" id="MF_00652">
    <property type="entry name" value="UPF0246"/>
    <property type="match status" value="1"/>
</dbReference>
<dbReference type="InterPro" id="IPR005583">
    <property type="entry name" value="YaaA"/>
</dbReference>
<dbReference type="NCBIfam" id="NF002546">
    <property type="entry name" value="PRK02101.2-4"/>
    <property type="match status" value="1"/>
</dbReference>
<dbReference type="PANTHER" id="PTHR30283:SF4">
    <property type="entry name" value="PEROXIDE STRESS RESISTANCE PROTEIN YAAA"/>
    <property type="match status" value="1"/>
</dbReference>
<dbReference type="PANTHER" id="PTHR30283">
    <property type="entry name" value="PEROXIDE STRESS RESPONSE PROTEIN YAAA"/>
    <property type="match status" value="1"/>
</dbReference>
<dbReference type="Pfam" id="PF03883">
    <property type="entry name" value="H2O2_YaaD"/>
    <property type="match status" value="1"/>
</dbReference>
<reference key="1">
    <citation type="journal article" date="2003" name="Appl. Microbiol. Biotechnol.">
        <title>The Corynebacterium glutamicum genome: features and impacts on biotechnological processes.</title>
        <authorList>
            <person name="Ikeda M."/>
            <person name="Nakagawa S."/>
        </authorList>
    </citation>
    <scope>NUCLEOTIDE SEQUENCE [LARGE SCALE GENOMIC DNA]</scope>
    <source>
        <strain>ATCC 13032 / DSM 20300 / JCM 1318 / BCRC 11384 / CCUG 27702 / LMG 3730 / NBRC 12168 / NCIMB 10025 / NRRL B-2784 / 534</strain>
    </source>
</reference>
<reference key="2">
    <citation type="journal article" date="2003" name="J. Biotechnol.">
        <title>The complete Corynebacterium glutamicum ATCC 13032 genome sequence and its impact on the production of L-aspartate-derived amino acids and vitamins.</title>
        <authorList>
            <person name="Kalinowski J."/>
            <person name="Bathe B."/>
            <person name="Bartels D."/>
            <person name="Bischoff N."/>
            <person name="Bott M."/>
            <person name="Burkovski A."/>
            <person name="Dusch N."/>
            <person name="Eggeling L."/>
            <person name="Eikmanns B.J."/>
            <person name="Gaigalat L."/>
            <person name="Goesmann A."/>
            <person name="Hartmann M."/>
            <person name="Huthmacher K."/>
            <person name="Kraemer R."/>
            <person name="Linke B."/>
            <person name="McHardy A.C."/>
            <person name="Meyer F."/>
            <person name="Moeckel B."/>
            <person name="Pfefferle W."/>
            <person name="Puehler A."/>
            <person name="Rey D.A."/>
            <person name="Rueckert C."/>
            <person name="Rupp O."/>
            <person name="Sahm H."/>
            <person name="Wendisch V.F."/>
            <person name="Wiegraebe I."/>
            <person name="Tauch A."/>
        </authorList>
    </citation>
    <scope>NUCLEOTIDE SEQUENCE [LARGE SCALE GENOMIC DNA]</scope>
    <source>
        <strain>ATCC 13032 / DSM 20300 / JCM 1318 / BCRC 11384 / CCUG 27702 / LMG 3730 / NBRC 12168 / NCIMB 10025 / NRRL B-2784 / 534</strain>
    </source>
</reference>
<evidence type="ECO:0000255" key="1">
    <source>
        <dbReference type="HAMAP-Rule" id="MF_00652"/>
    </source>
</evidence>
<name>Y1995_CORGL</name>
<comment type="similarity">
    <text evidence="1">Belongs to the UPF0246 family.</text>
</comment>
<gene>
    <name type="ordered locus">Cgl1995</name>
    <name type="ordered locus">cg2186</name>
</gene>
<keyword id="KW-1185">Reference proteome</keyword>
<feature type="chain" id="PRO_0000203982" description="UPF0246 protein Cgl1995/cg2186">
    <location>
        <begin position="1"/>
        <end position="245"/>
    </location>
</feature>
<sequence>MLIVLPPSETKTHGGSGKPLDFHHLSFPSLTKARQTILADLQALEVDEALKVLGISEKLRPEAESNRALETSPTMPAIFRYSGVLYDALDAATLPEKALERLAIGSALFGVIHATDPIPHYRLSGGTKLPTKSGELPTMKARWGTSISEALIDVNQLVIDLRSGTYQQLGRVKDAVTVRVESVMEDGSRKVVSHFNKHYKGELARVLALSEKEAHNAEDVMSIAQAAGLVVEENPNHKETLTLVV</sequence>
<accession>Q8NP30</accession>
<organism>
    <name type="scientific">Corynebacterium glutamicum (strain ATCC 13032 / DSM 20300 / JCM 1318 / BCRC 11384 / CCUG 27702 / LMG 3730 / NBRC 12168 / NCIMB 10025 / NRRL B-2784 / 534)</name>
    <dbReference type="NCBI Taxonomy" id="196627"/>
    <lineage>
        <taxon>Bacteria</taxon>
        <taxon>Bacillati</taxon>
        <taxon>Actinomycetota</taxon>
        <taxon>Actinomycetes</taxon>
        <taxon>Mycobacteriales</taxon>
        <taxon>Corynebacteriaceae</taxon>
        <taxon>Corynebacterium</taxon>
    </lineage>
</organism>
<proteinExistence type="inferred from homology"/>